<comment type="function">
    <text evidence="1">The coatomer is a cytosolic protein complex that binds to dilysine motifs and reversibly associates with Golgi non-clathrin-coated vesicles, which further mediate biosynthetic protein transport from the ER, via the Golgi up to the trans Golgi network. The coatomer complex is required for budding from Golgi membranes, and is essential for the retrograde Golgi-to-ER transport of dilysine-tagged proteins (By similarity).</text>
</comment>
<comment type="subunit">
    <text evidence="1">Oligomeric complex that consists of at least the alpha, beta, beta', gamma, delta, epsilon and zeta subunits.</text>
</comment>
<comment type="subcellular location">
    <subcellularLocation>
        <location evidence="1">Cytoplasm</location>
    </subcellularLocation>
    <subcellularLocation>
        <location evidence="1">Golgi apparatus membrane</location>
        <topology evidence="1">Peripheral membrane protein</topology>
        <orientation evidence="1">Cytoplasmic side</orientation>
    </subcellularLocation>
    <subcellularLocation>
        <location evidence="1">Cytoplasmic vesicle</location>
        <location evidence="1">COPI-coated vesicle membrane</location>
        <topology evidence="1">Peripheral membrane protein</topology>
        <orientation evidence="1">Cytoplasmic side</orientation>
    </subcellularLocation>
    <text evidence="1">The coatomer is cytoplasmic or polymerized on the cytoplasmic side of the Golgi, as well as on the vesicles/buds originating from it.</text>
</comment>
<comment type="similarity">
    <text evidence="2">Belongs to the COPE family.</text>
</comment>
<keyword id="KW-0963">Cytoplasm</keyword>
<keyword id="KW-0968">Cytoplasmic vesicle</keyword>
<keyword id="KW-0931">ER-Golgi transport</keyword>
<keyword id="KW-0333">Golgi apparatus</keyword>
<keyword id="KW-0472">Membrane</keyword>
<keyword id="KW-0653">Protein transport</keyword>
<keyword id="KW-1185">Reference proteome</keyword>
<keyword id="KW-0813">Transport</keyword>
<gene>
    <name type="primary">cope-1</name>
    <name type="ORF">F45G2.4</name>
</gene>
<dbReference type="EMBL" id="Z93382">
    <property type="protein sequence ID" value="CAB07613.1"/>
    <property type="molecule type" value="Genomic_DNA"/>
</dbReference>
<dbReference type="PIR" id="T22236">
    <property type="entry name" value="T22236"/>
</dbReference>
<dbReference type="RefSeq" id="NP_499771.1">
    <property type="nucleotide sequence ID" value="NM_067370.7"/>
</dbReference>
<dbReference type="SMR" id="O62246"/>
<dbReference type="BioGRID" id="41935">
    <property type="interactions" value="15"/>
</dbReference>
<dbReference type="DIP" id="DIP-24766N"/>
<dbReference type="FunCoup" id="O62246">
    <property type="interactions" value="2950"/>
</dbReference>
<dbReference type="IntAct" id="O62246">
    <property type="interactions" value="1"/>
</dbReference>
<dbReference type="STRING" id="6239.F45G2.4.2"/>
<dbReference type="PaxDb" id="6239-F45G2.4.2"/>
<dbReference type="PeptideAtlas" id="O62246"/>
<dbReference type="EnsemblMetazoa" id="F45G2.4.1">
    <property type="protein sequence ID" value="F45G2.4.1"/>
    <property type="gene ID" value="WBGene00009732"/>
</dbReference>
<dbReference type="GeneID" id="176766"/>
<dbReference type="KEGG" id="cel:CELE_F45G2.4"/>
<dbReference type="UCSC" id="F45G2.4.2">
    <property type="organism name" value="c. elegans"/>
</dbReference>
<dbReference type="AGR" id="WB:WBGene00009732"/>
<dbReference type="CTD" id="176766"/>
<dbReference type="WormBase" id="F45G2.4">
    <property type="protein sequence ID" value="CE16047"/>
    <property type="gene ID" value="WBGene00009732"/>
    <property type="gene designation" value="cope-1"/>
</dbReference>
<dbReference type="eggNOG" id="KOG3081">
    <property type="taxonomic scope" value="Eukaryota"/>
</dbReference>
<dbReference type="GeneTree" id="ENSGT00390000003478"/>
<dbReference type="HOGENOM" id="CLU_049363_0_0_1"/>
<dbReference type="InParanoid" id="O62246"/>
<dbReference type="OMA" id="MIVLSQH"/>
<dbReference type="OrthoDB" id="310217at2759"/>
<dbReference type="PhylomeDB" id="O62246"/>
<dbReference type="Reactome" id="R-CEL-6807878">
    <property type="pathway name" value="COPI-mediated anterograde transport"/>
</dbReference>
<dbReference type="Reactome" id="R-CEL-6811434">
    <property type="pathway name" value="COPI-dependent Golgi-to-ER retrograde traffic"/>
</dbReference>
<dbReference type="PRO" id="PR:O62246"/>
<dbReference type="Proteomes" id="UP000001940">
    <property type="component" value="Chromosome III"/>
</dbReference>
<dbReference type="Bgee" id="WBGene00009732">
    <property type="expression patterns" value="Expressed in pharyngeal muscle cell (C elegans) and 4 other cell types or tissues"/>
</dbReference>
<dbReference type="GO" id="GO:0030126">
    <property type="term" value="C:COPI vesicle coat"/>
    <property type="evidence" value="ECO:0000318"/>
    <property type="project" value="GO_Central"/>
</dbReference>
<dbReference type="GO" id="GO:0000139">
    <property type="term" value="C:Golgi membrane"/>
    <property type="evidence" value="ECO:0007669"/>
    <property type="project" value="UniProtKB-SubCell"/>
</dbReference>
<dbReference type="GO" id="GO:0005739">
    <property type="term" value="C:mitochondrion"/>
    <property type="evidence" value="ECO:0007005"/>
    <property type="project" value="WormBase"/>
</dbReference>
<dbReference type="GO" id="GO:0005198">
    <property type="term" value="F:structural molecule activity"/>
    <property type="evidence" value="ECO:0007669"/>
    <property type="project" value="InterPro"/>
</dbReference>
<dbReference type="GO" id="GO:0006888">
    <property type="term" value="P:endoplasmic reticulum to Golgi vesicle-mediated transport"/>
    <property type="evidence" value="ECO:0000318"/>
    <property type="project" value="GO_Central"/>
</dbReference>
<dbReference type="GO" id="GO:0006891">
    <property type="term" value="P:intra-Golgi vesicle-mediated transport"/>
    <property type="evidence" value="ECO:0000318"/>
    <property type="project" value="GO_Central"/>
</dbReference>
<dbReference type="GO" id="GO:0015031">
    <property type="term" value="P:protein transport"/>
    <property type="evidence" value="ECO:0007669"/>
    <property type="project" value="UniProtKB-KW"/>
</dbReference>
<dbReference type="GO" id="GO:0006890">
    <property type="term" value="P:retrograde vesicle-mediated transport, Golgi to endoplasmic reticulum"/>
    <property type="evidence" value="ECO:0007669"/>
    <property type="project" value="InterPro"/>
</dbReference>
<dbReference type="Gene3D" id="1.25.40.10">
    <property type="entry name" value="Tetratricopeptide repeat domain"/>
    <property type="match status" value="1"/>
</dbReference>
<dbReference type="InterPro" id="IPR006822">
    <property type="entry name" value="Coatomer_esu"/>
</dbReference>
<dbReference type="InterPro" id="IPR011990">
    <property type="entry name" value="TPR-like_helical_dom_sf"/>
</dbReference>
<dbReference type="PANTHER" id="PTHR10805">
    <property type="entry name" value="COATOMER SUBUNIT EPSILON"/>
    <property type="match status" value="1"/>
</dbReference>
<dbReference type="PANTHER" id="PTHR10805:SF0">
    <property type="entry name" value="COATOMER SUBUNIT EPSILON"/>
    <property type="match status" value="1"/>
</dbReference>
<dbReference type="Pfam" id="PF04733">
    <property type="entry name" value="Coatomer_E"/>
    <property type="match status" value="1"/>
</dbReference>
<dbReference type="PIRSF" id="PIRSF016478">
    <property type="entry name" value="Coatomer_esu"/>
    <property type="match status" value="1"/>
</dbReference>
<dbReference type="SUPFAM" id="SSF48452">
    <property type="entry name" value="TPR-like"/>
    <property type="match status" value="1"/>
</dbReference>
<organism>
    <name type="scientific">Caenorhabditis elegans</name>
    <dbReference type="NCBI Taxonomy" id="6239"/>
    <lineage>
        <taxon>Eukaryota</taxon>
        <taxon>Metazoa</taxon>
        <taxon>Ecdysozoa</taxon>
        <taxon>Nematoda</taxon>
        <taxon>Chromadorea</taxon>
        <taxon>Rhabditida</taxon>
        <taxon>Rhabditina</taxon>
        <taxon>Rhabditomorpha</taxon>
        <taxon>Rhabditoidea</taxon>
        <taxon>Rhabditidae</taxon>
        <taxon>Peloderinae</taxon>
        <taxon>Caenorhabditis</taxon>
    </lineage>
</organism>
<proteinExistence type="inferred from homology"/>
<reference key="1">
    <citation type="journal article" date="1998" name="Science">
        <title>Genome sequence of the nematode C. elegans: a platform for investigating biology.</title>
        <authorList>
            <consortium name="The C. elegans sequencing consortium"/>
        </authorList>
    </citation>
    <scope>NUCLEOTIDE SEQUENCE [LARGE SCALE GENOMIC DNA]</scope>
    <source>
        <strain>Bristol N2</strain>
    </source>
</reference>
<evidence type="ECO:0000250" key="1"/>
<evidence type="ECO:0000305" key="2"/>
<protein>
    <recommendedName>
        <fullName>Coatomer subunit epsilon</fullName>
    </recommendedName>
    <alternativeName>
        <fullName>Epsilon-coat protein</fullName>
        <shortName>Epsilon-COP</shortName>
    </alternativeName>
</protein>
<sequence length="292" mass="32803">MADKLFSIRNYFFLGSYQSCIGEALKFSSKNEEEKQEKDVYLYRSYIAQGQAFIPLKEIPAATKSADLAAVRRYAEFRNNPAAKKKILAEVQEEVASRNIKSEIAAVLAATILNEADLSQDAFRAVSRFEGLEARASKVFILIKMNKRKLAIGEVKKMNQIDEDATLSQLANALVTSFGASGKVKDALYIYSEMSDKYGRTTDLEMHQAVVSILTQDYAAAEELLESALERDNKDADVLINSIVSAQLNEKDDDVVERFISQLKHEHPNHPWVIDFNEKEAEFDRVASDSRA</sequence>
<name>COPE_CAEEL</name>
<feature type="chain" id="PRO_0000193853" description="Coatomer subunit epsilon">
    <location>
        <begin position="1"/>
        <end position="292"/>
    </location>
</feature>
<accession>O62246</accession>